<name>TRPD_CALS4</name>
<reference key="1">
    <citation type="journal article" date="2002" name="Genome Res.">
        <title>A complete sequence of the T. tengcongensis genome.</title>
        <authorList>
            <person name="Bao Q."/>
            <person name="Tian Y."/>
            <person name="Li W."/>
            <person name="Xu Z."/>
            <person name="Xuan Z."/>
            <person name="Hu S."/>
            <person name="Dong W."/>
            <person name="Yang J."/>
            <person name="Chen Y."/>
            <person name="Xue Y."/>
            <person name="Xu Y."/>
            <person name="Lai X."/>
            <person name="Huang L."/>
            <person name="Dong X."/>
            <person name="Ma Y."/>
            <person name="Ling L."/>
            <person name="Tan H."/>
            <person name="Chen R."/>
            <person name="Wang J."/>
            <person name="Yu J."/>
            <person name="Yang H."/>
        </authorList>
    </citation>
    <scope>NUCLEOTIDE SEQUENCE [LARGE SCALE GENOMIC DNA]</scope>
    <source>
        <strain>DSM 15242 / JCM 11007 / NBRC 100824 / MB4</strain>
    </source>
</reference>
<comment type="function">
    <text evidence="1">Catalyzes the transfer of the phosphoribosyl group of 5-phosphorylribose-1-pyrophosphate (PRPP) to anthranilate to yield N-(5'-phosphoribosyl)-anthranilate (PRA).</text>
</comment>
<comment type="catalytic activity">
    <reaction evidence="1">
        <text>N-(5-phospho-beta-D-ribosyl)anthranilate + diphosphate = 5-phospho-alpha-D-ribose 1-diphosphate + anthranilate</text>
        <dbReference type="Rhea" id="RHEA:11768"/>
        <dbReference type="ChEBI" id="CHEBI:16567"/>
        <dbReference type="ChEBI" id="CHEBI:18277"/>
        <dbReference type="ChEBI" id="CHEBI:33019"/>
        <dbReference type="ChEBI" id="CHEBI:58017"/>
        <dbReference type="EC" id="2.4.2.18"/>
    </reaction>
</comment>
<comment type="cofactor">
    <cofactor evidence="1">
        <name>Mg(2+)</name>
        <dbReference type="ChEBI" id="CHEBI:18420"/>
    </cofactor>
    <text evidence="1">Binds 2 magnesium ions per monomer.</text>
</comment>
<comment type="pathway">
    <text evidence="1">Amino-acid biosynthesis; L-tryptophan biosynthesis; L-tryptophan from chorismate: step 2/5.</text>
</comment>
<comment type="subunit">
    <text evidence="1">Homodimer.</text>
</comment>
<comment type="similarity">
    <text evidence="1">Belongs to the anthranilate phosphoribosyltransferase family.</text>
</comment>
<proteinExistence type="inferred from homology"/>
<sequence>MLQEAIKKIVLKENLDEKEAYEVMGEIMSGNGTPSLIGGLLIGLRLKGESVEEITGFAKAMRDNAVKLQLDADYVIDTCGTGGDGGKTFNISTAVAIIASAAGVKVAKHGNRAVSSKSGSADVLRELGFNIEAEPMYTKKMIEEKGMGFLFAPLYHRAMKNVLPIRRELGTRTVFNLLGPLTNPAPIKGQVLGVYDRNLTHPIAEVLLKLGIERAMVVHGFDGLDEITTTAPTYVSEVKEGEIFDYVIDPLDFDIPYSKPEDLKGKGPRENAEIIIDILKGQKGPRRDIVVLNTAAALYVGKLVENLKEGVELAERLLNSGLAYERFLEILGYQRRIIS</sequence>
<evidence type="ECO:0000255" key="1">
    <source>
        <dbReference type="HAMAP-Rule" id="MF_00211"/>
    </source>
</evidence>
<protein>
    <recommendedName>
        <fullName evidence="1">Anthranilate phosphoribosyltransferase</fullName>
        <ecNumber evidence="1">2.4.2.18</ecNumber>
    </recommendedName>
</protein>
<organism>
    <name type="scientific">Caldanaerobacter subterraneus subsp. tengcongensis (strain DSM 15242 / JCM 11007 / NBRC 100824 / MB4)</name>
    <name type="common">Thermoanaerobacter tengcongensis</name>
    <dbReference type="NCBI Taxonomy" id="273068"/>
    <lineage>
        <taxon>Bacteria</taxon>
        <taxon>Bacillati</taxon>
        <taxon>Bacillota</taxon>
        <taxon>Clostridia</taxon>
        <taxon>Thermoanaerobacterales</taxon>
        <taxon>Thermoanaerobacteraceae</taxon>
        <taxon>Caldanaerobacter</taxon>
    </lineage>
</organism>
<feature type="chain" id="PRO_0000154497" description="Anthranilate phosphoribosyltransferase">
    <location>
        <begin position="1"/>
        <end position="339"/>
    </location>
</feature>
<feature type="binding site" evidence="1">
    <location>
        <position position="80"/>
    </location>
    <ligand>
        <name>5-phospho-alpha-D-ribose 1-diphosphate</name>
        <dbReference type="ChEBI" id="CHEBI:58017"/>
    </ligand>
</feature>
<feature type="binding site" evidence="1">
    <location>
        <position position="80"/>
    </location>
    <ligand>
        <name>anthranilate</name>
        <dbReference type="ChEBI" id="CHEBI:16567"/>
        <label>1</label>
    </ligand>
</feature>
<feature type="binding site" evidence="1">
    <location>
        <begin position="83"/>
        <end position="84"/>
    </location>
    <ligand>
        <name>5-phospho-alpha-D-ribose 1-diphosphate</name>
        <dbReference type="ChEBI" id="CHEBI:58017"/>
    </ligand>
</feature>
<feature type="binding site" evidence="1">
    <location>
        <position position="88"/>
    </location>
    <ligand>
        <name>5-phospho-alpha-D-ribose 1-diphosphate</name>
        <dbReference type="ChEBI" id="CHEBI:58017"/>
    </ligand>
</feature>
<feature type="binding site" evidence="1">
    <location>
        <begin position="90"/>
        <end position="93"/>
    </location>
    <ligand>
        <name>5-phospho-alpha-D-ribose 1-diphosphate</name>
        <dbReference type="ChEBI" id="CHEBI:58017"/>
    </ligand>
</feature>
<feature type="binding site" evidence="1">
    <location>
        <position position="92"/>
    </location>
    <ligand>
        <name>Mg(2+)</name>
        <dbReference type="ChEBI" id="CHEBI:18420"/>
        <label>1</label>
    </ligand>
</feature>
<feature type="binding site" evidence="1">
    <location>
        <begin position="108"/>
        <end position="116"/>
    </location>
    <ligand>
        <name>5-phospho-alpha-D-ribose 1-diphosphate</name>
        <dbReference type="ChEBI" id="CHEBI:58017"/>
    </ligand>
</feature>
<feature type="binding site" evidence="1">
    <location>
        <position position="111"/>
    </location>
    <ligand>
        <name>anthranilate</name>
        <dbReference type="ChEBI" id="CHEBI:16567"/>
        <label>1</label>
    </ligand>
</feature>
<feature type="binding site" evidence="1">
    <location>
        <position position="120"/>
    </location>
    <ligand>
        <name>5-phospho-alpha-D-ribose 1-diphosphate</name>
        <dbReference type="ChEBI" id="CHEBI:58017"/>
    </ligand>
</feature>
<feature type="binding site" evidence="1">
    <location>
        <position position="166"/>
    </location>
    <ligand>
        <name>anthranilate</name>
        <dbReference type="ChEBI" id="CHEBI:16567"/>
        <label>2</label>
    </ligand>
</feature>
<feature type="binding site" evidence="1">
    <location>
        <position position="225"/>
    </location>
    <ligand>
        <name>Mg(2+)</name>
        <dbReference type="ChEBI" id="CHEBI:18420"/>
        <label>2</label>
    </ligand>
</feature>
<feature type="binding site" evidence="1">
    <location>
        <position position="226"/>
    </location>
    <ligand>
        <name>Mg(2+)</name>
        <dbReference type="ChEBI" id="CHEBI:18420"/>
        <label>1</label>
    </ligand>
</feature>
<feature type="binding site" evidence="1">
    <location>
        <position position="226"/>
    </location>
    <ligand>
        <name>Mg(2+)</name>
        <dbReference type="ChEBI" id="CHEBI:18420"/>
        <label>2</label>
    </ligand>
</feature>
<dbReference type="EC" id="2.4.2.18" evidence="1"/>
<dbReference type="EMBL" id="AE008691">
    <property type="protein sequence ID" value="AAM24785.1"/>
    <property type="molecule type" value="Genomic_DNA"/>
</dbReference>
<dbReference type="RefSeq" id="WP_011025818.1">
    <property type="nucleotide sequence ID" value="NC_003869.1"/>
</dbReference>
<dbReference type="SMR" id="Q8R9M6"/>
<dbReference type="STRING" id="273068.TTE1581"/>
<dbReference type="KEGG" id="tte:TTE1581"/>
<dbReference type="eggNOG" id="COG0547">
    <property type="taxonomic scope" value="Bacteria"/>
</dbReference>
<dbReference type="HOGENOM" id="CLU_034315_2_1_9"/>
<dbReference type="OrthoDB" id="9806430at2"/>
<dbReference type="UniPathway" id="UPA00035">
    <property type="reaction ID" value="UER00041"/>
</dbReference>
<dbReference type="Proteomes" id="UP000000555">
    <property type="component" value="Chromosome"/>
</dbReference>
<dbReference type="GO" id="GO:0005829">
    <property type="term" value="C:cytosol"/>
    <property type="evidence" value="ECO:0007669"/>
    <property type="project" value="TreeGrafter"/>
</dbReference>
<dbReference type="GO" id="GO:0004048">
    <property type="term" value="F:anthranilate phosphoribosyltransferase activity"/>
    <property type="evidence" value="ECO:0007669"/>
    <property type="project" value="UniProtKB-UniRule"/>
</dbReference>
<dbReference type="GO" id="GO:0000287">
    <property type="term" value="F:magnesium ion binding"/>
    <property type="evidence" value="ECO:0007669"/>
    <property type="project" value="UniProtKB-UniRule"/>
</dbReference>
<dbReference type="GO" id="GO:0000162">
    <property type="term" value="P:L-tryptophan biosynthetic process"/>
    <property type="evidence" value="ECO:0007669"/>
    <property type="project" value="UniProtKB-UniRule"/>
</dbReference>
<dbReference type="FunFam" id="3.40.1030.10:FF:000002">
    <property type="entry name" value="Anthranilate phosphoribosyltransferase"/>
    <property type="match status" value="1"/>
</dbReference>
<dbReference type="Gene3D" id="3.40.1030.10">
    <property type="entry name" value="Nucleoside phosphorylase/phosphoribosyltransferase catalytic domain"/>
    <property type="match status" value="1"/>
</dbReference>
<dbReference type="Gene3D" id="1.20.970.10">
    <property type="entry name" value="Transferase, Pyrimidine Nucleoside Phosphorylase, Chain C"/>
    <property type="match status" value="1"/>
</dbReference>
<dbReference type="HAMAP" id="MF_00211">
    <property type="entry name" value="TrpD"/>
    <property type="match status" value="1"/>
</dbReference>
<dbReference type="InterPro" id="IPR005940">
    <property type="entry name" value="Anthranilate_Pribosyl_Tfrase"/>
</dbReference>
<dbReference type="InterPro" id="IPR000312">
    <property type="entry name" value="Glycosyl_Trfase_fam3"/>
</dbReference>
<dbReference type="InterPro" id="IPR017459">
    <property type="entry name" value="Glycosyl_Trfase_fam3_N_dom"/>
</dbReference>
<dbReference type="InterPro" id="IPR036320">
    <property type="entry name" value="Glycosyl_Trfase_fam3_N_dom_sf"/>
</dbReference>
<dbReference type="InterPro" id="IPR035902">
    <property type="entry name" value="Nuc_phospho_transferase"/>
</dbReference>
<dbReference type="NCBIfam" id="TIGR01245">
    <property type="entry name" value="trpD"/>
    <property type="match status" value="1"/>
</dbReference>
<dbReference type="PANTHER" id="PTHR43285">
    <property type="entry name" value="ANTHRANILATE PHOSPHORIBOSYLTRANSFERASE"/>
    <property type="match status" value="1"/>
</dbReference>
<dbReference type="PANTHER" id="PTHR43285:SF2">
    <property type="entry name" value="ANTHRANILATE PHOSPHORIBOSYLTRANSFERASE"/>
    <property type="match status" value="1"/>
</dbReference>
<dbReference type="Pfam" id="PF02885">
    <property type="entry name" value="Glycos_trans_3N"/>
    <property type="match status" value="1"/>
</dbReference>
<dbReference type="Pfam" id="PF00591">
    <property type="entry name" value="Glycos_transf_3"/>
    <property type="match status" value="1"/>
</dbReference>
<dbReference type="SUPFAM" id="SSF52418">
    <property type="entry name" value="Nucleoside phosphorylase/phosphoribosyltransferase catalytic domain"/>
    <property type="match status" value="1"/>
</dbReference>
<dbReference type="SUPFAM" id="SSF47648">
    <property type="entry name" value="Nucleoside phosphorylase/phosphoribosyltransferase N-terminal domain"/>
    <property type="match status" value="1"/>
</dbReference>
<gene>
    <name evidence="1" type="primary">trpD</name>
    <name type="ordered locus">TTE1581</name>
</gene>
<accession>Q8R9M6</accession>
<keyword id="KW-0028">Amino-acid biosynthesis</keyword>
<keyword id="KW-0057">Aromatic amino acid biosynthesis</keyword>
<keyword id="KW-0328">Glycosyltransferase</keyword>
<keyword id="KW-0460">Magnesium</keyword>
<keyword id="KW-0479">Metal-binding</keyword>
<keyword id="KW-1185">Reference proteome</keyword>
<keyword id="KW-0808">Transferase</keyword>
<keyword id="KW-0822">Tryptophan biosynthesis</keyword>